<organism>
    <name type="scientific">Aeropyrum pernix (strain ATCC 700893 / DSM 11879 / JCM 9820 / NBRC 100138 / K1)</name>
    <dbReference type="NCBI Taxonomy" id="272557"/>
    <lineage>
        <taxon>Archaea</taxon>
        <taxon>Thermoproteota</taxon>
        <taxon>Thermoprotei</taxon>
        <taxon>Desulfurococcales</taxon>
        <taxon>Desulfurococcaceae</taxon>
        <taxon>Aeropyrum</taxon>
    </lineage>
</organism>
<evidence type="ECO:0000255" key="1">
    <source>
        <dbReference type="HAMAP-Rule" id="MF_00814"/>
    </source>
</evidence>
<sequence length="117" mass="12873">MLPVNPRDLEKMMRRLGIKVEQLSADEARIVLGSGETMVFRSPTVIVMRAKGQPPMVYLVGDYTVEKPREETAAEITEEDVALVAEQAGVSMEEARKALEESGGDIAEAILRLKGEE</sequence>
<proteinExistence type="inferred from homology"/>
<protein>
    <recommendedName>
        <fullName evidence="1">Nascent polypeptide-associated complex protein</fullName>
    </recommendedName>
</protein>
<accession>Q9YFQ1</accession>
<dbReference type="EMBL" id="BA000002">
    <property type="protein sequence ID" value="BAA79110.2"/>
    <property type="molecule type" value="Genomic_DNA"/>
</dbReference>
<dbReference type="PIR" id="D72776">
    <property type="entry name" value="D72776"/>
</dbReference>
<dbReference type="SMR" id="Q9YFQ1"/>
<dbReference type="STRING" id="272557.APE_0198.1"/>
<dbReference type="EnsemblBacteria" id="BAA79110">
    <property type="protein sequence ID" value="BAA79110"/>
    <property type="gene ID" value="APE_0198.1"/>
</dbReference>
<dbReference type="KEGG" id="ape:APE_0198.1"/>
<dbReference type="eggNOG" id="arCOG04061">
    <property type="taxonomic scope" value="Archaea"/>
</dbReference>
<dbReference type="Proteomes" id="UP000002518">
    <property type="component" value="Chromosome"/>
</dbReference>
<dbReference type="GO" id="GO:0003723">
    <property type="term" value="F:RNA binding"/>
    <property type="evidence" value="ECO:0007669"/>
    <property type="project" value="UniProtKB-UniRule"/>
</dbReference>
<dbReference type="GO" id="GO:0015031">
    <property type="term" value="P:protein transport"/>
    <property type="evidence" value="ECO:0007669"/>
    <property type="project" value="UniProtKB-UniRule"/>
</dbReference>
<dbReference type="CDD" id="cd14359">
    <property type="entry name" value="UBA_AeNAC"/>
    <property type="match status" value="1"/>
</dbReference>
<dbReference type="Gene3D" id="1.10.8.10">
    <property type="entry name" value="DNA helicase RuvA subunit, C-terminal domain"/>
    <property type="match status" value="1"/>
</dbReference>
<dbReference type="Gene3D" id="2.20.70.30">
    <property type="entry name" value="Nascent polypeptide-associated complex domain"/>
    <property type="match status" value="1"/>
</dbReference>
<dbReference type="HAMAP" id="MF_00814">
    <property type="entry name" value="NAC_arch"/>
    <property type="match status" value="1"/>
</dbReference>
<dbReference type="InterPro" id="IPR044034">
    <property type="entry name" value="NAC-like_UBA"/>
</dbReference>
<dbReference type="InterPro" id="IPR038187">
    <property type="entry name" value="NAC_A/B_dom_sf"/>
</dbReference>
<dbReference type="InterPro" id="IPR005231">
    <property type="entry name" value="NAC_arc"/>
</dbReference>
<dbReference type="InterPro" id="IPR002715">
    <property type="entry name" value="Nas_poly-pep-assoc_cplx_dom"/>
</dbReference>
<dbReference type="InterPro" id="IPR009060">
    <property type="entry name" value="UBA-like_sf"/>
</dbReference>
<dbReference type="NCBIfam" id="TIGR00264">
    <property type="entry name" value="archaeal-type nascent polypeptide-associated complex protein"/>
    <property type="match status" value="1"/>
</dbReference>
<dbReference type="Pfam" id="PF19026">
    <property type="entry name" value="UBA_HYPK"/>
    <property type="match status" value="1"/>
</dbReference>
<dbReference type="SMART" id="SM01407">
    <property type="entry name" value="NAC"/>
    <property type="match status" value="1"/>
</dbReference>
<dbReference type="SUPFAM" id="SSF46934">
    <property type="entry name" value="UBA-like"/>
    <property type="match status" value="1"/>
</dbReference>
<dbReference type="PROSITE" id="PS51151">
    <property type="entry name" value="NAC_AB"/>
    <property type="match status" value="1"/>
</dbReference>
<gene>
    <name evidence="1" type="primary">nac</name>
    <name type="ordered locus">APE_0198.1</name>
</gene>
<comment type="function">
    <text evidence="1">Contacts the emerging nascent chain on the ribosome.</text>
</comment>
<comment type="subunit">
    <text evidence="1">Homodimer. Interacts with the ribosome. Binds ribosomal RNA.</text>
</comment>
<comment type="similarity">
    <text evidence="1">Belongs to the NAC-alpha family.</text>
</comment>
<keyword id="KW-0653">Protein transport</keyword>
<keyword id="KW-1185">Reference proteome</keyword>
<keyword id="KW-0694">RNA-binding</keyword>
<keyword id="KW-0813">Transport</keyword>
<name>NAC_AERPE</name>
<reference key="1">
    <citation type="journal article" date="1999" name="DNA Res.">
        <title>Complete genome sequence of an aerobic hyper-thermophilic crenarchaeon, Aeropyrum pernix K1.</title>
        <authorList>
            <person name="Kawarabayasi Y."/>
            <person name="Hino Y."/>
            <person name="Horikawa H."/>
            <person name="Yamazaki S."/>
            <person name="Haikawa Y."/>
            <person name="Jin-no K."/>
            <person name="Takahashi M."/>
            <person name="Sekine M."/>
            <person name="Baba S."/>
            <person name="Ankai A."/>
            <person name="Kosugi H."/>
            <person name="Hosoyama A."/>
            <person name="Fukui S."/>
            <person name="Nagai Y."/>
            <person name="Nishijima K."/>
            <person name="Nakazawa H."/>
            <person name="Takamiya M."/>
            <person name="Masuda S."/>
            <person name="Funahashi T."/>
            <person name="Tanaka T."/>
            <person name="Kudoh Y."/>
            <person name="Yamazaki J."/>
            <person name="Kushida N."/>
            <person name="Oguchi A."/>
            <person name="Aoki K."/>
            <person name="Kubota K."/>
            <person name="Nakamura Y."/>
            <person name="Nomura N."/>
            <person name="Sako Y."/>
            <person name="Kikuchi H."/>
        </authorList>
    </citation>
    <scope>NUCLEOTIDE SEQUENCE [LARGE SCALE GENOMIC DNA]</scope>
    <source>
        <strain>ATCC 700893 / DSM 11879 / JCM 9820 / NBRC 100138 / K1</strain>
    </source>
</reference>
<feature type="chain" id="PRO_0000135595" description="Nascent polypeptide-associated complex protein">
    <location>
        <begin position="1"/>
        <end position="117"/>
    </location>
</feature>
<feature type="domain" description="NAC-A/B" evidence="1">
    <location>
        <begin position="3"/>
        <end position="72"/>
    </location>
</feature>